<gene>
    <name evidence="1" type="primary">rpsZ</name>
    <name evidence="1" type="synonym">rpsN-2</name>
    <name evidence="1" type="synonym">rpsN1</name>
    <name type="ordered locus">SERP1818</name>
</gene>
<dbReference type="EMBL" id="CP000029">
    <property type="protein sequence ID" value="AAW55142.1"/>
    <property type="molecule type" value="Genomic_DNA"/>
</dbReference>
<dbReference type="RefSeq" id="WP_001829713.1">
    <property type="nucleotide sequence ID" value="NC_002976.3"/>
</dbReference>
<dbReference type="SMR" id="Q5HM12"/>
<dbReference type="STRING" id="176279.SERP1818"/>
<dbReference type="KEGG" id="ser:SERP1818"/>
<dbReference type="eggNOG" id="COG0199">
    <property type="taxonomic scope" value="Bacteria"/>
</dbReference>
<dbReference type="HOGENOM" id="CLU_139869_3_0_9"/>
<dbReference type="Proteomes" id="UP000000531">
    <property type="component" value="Chromosome"/>
</dbReference>
<dbReference type="GO" id="GO:0015935">
    <property type="term" value="C:small ribosomal subunit"/>
    <property type="evidence" value="ECO:0007669"/>
    <property type="project" value="TreeGrafter"/>
</dbReference>
<dbReference type="GO" id="GO:0019843">
    <property type="term" value="F:rRNA binding"/>
    <property type="evidence" value="ECO:0007669"/>
    <property type="project" value="UniProtKB-UniRule"/>
</dbReference>
<dbReference type="GO" id="GO:0003735">
    <property type="term" value="F:structural constituent of ribosome"/>
    <property type="evidence" value="ECO:0007669"/>
    <property type="project" value="InterPro"/>
</dbReference>
<dbReference type="GO" id="GO:0008270">
    <property type="term" value="F:zinc ion binding"/>
    <property type="evidence" value="ECO:0007669"/>
    <property type="project" value="UniProtKB-UniRule"/>
</dbReference>
<dbReference type="GO" id="GO:0006412">
    <property type="term" value="P:translation"/>
    <property type="evidence" value="ECO:0007669"/>
    <property type="project" value="UniProtKB-UniRule"/>
</dbReference>
<dbReference type="FunFam" id="4.10.830.10:FF:000001">
    <property type="entry name" value="30S ribosomal protein S14 type Z"/>
    <property type="match status" value="1"/>
</dbReference>
<dbReference type="Gene3D" id="4.10.830.10">
    <property type="entry name" value="30s Ribosomal Protein S14, Chain N"/>
    <property type="match status" value="1"/>
</dbReference>
<dbReference type="HAMAP" id="MF_01364_B">
    <property type="entry name" value="Ribosomal_uS14_2_B"/>
    <property type="match status" value="1"/>
</dbReference>
<dbReference type="InterPro" id="IPR001209">
    <property type="entry name" value="Ribosomal_uS14"/>
</dbReference>
<dbReference type="InterPro" id="IPR023053">
    <property type="entry name" value="Ribosomal_uS14_bact"/>
</dbReference>
<dbReference type="InterPro" id="IPR018271">
    <property type="entry name" value="Ribosomal_uS14_CS"/>
</dbReference>
<dbReference type="InterPro" id="IPR043140">
    <property type="entry name" value="Ribosomal_uS14_sf"/>
</dbReference>
<dbReference type="NCBIfam" id="NF005974">
    <property type="entry name" value="PRK08061.1"/>
    <property type="match status" value="1"/>
</dbReference>
<dbReference type="PANTHER" id="PTHR19836">
    <property type="entry name" value="30S RIBOSOMAL PROTEIN S14"/>
    <property type="match status" value="1"/>
</dbReference>
<dbReference type="PANTHER" id="PTHR19836:SF26">
    <property type="entry name" value="SMALL RIBOSOMAL SUBUNIT PROTEIN US14B"/>
    <property type="match status" value="1"/>
</dbReference>
<dbReference type="Pfam" id="PF00253">
    <property type="entry name" value="Ribosomal_S14"/>
    <property type="match status" value="1"/>
</dbReference>
<dbReference type="SUPFAM" id="SSF57716">
    <property type="entry name" value="Glucocorticoid receptor-like (DNA-binding domain)"/>
    <property type="match status" value="1"/>
</dbReference>
<dbReference type="PROSITE" id="PS00527">
    <property type="entry name" value="RIBOSOMAL_S14"/>
    <property type="match status" value="1"/>
</dbReference>
<proteinExistence type="inferred from homology"/>
<protein>
    <recommendedName>
        <fullName evidence="1">Small ribosomal subunit protein uS14B</fullName>
    </recommendedName>
    <alternativeName>
        <fullName evidence="2">30S ribosomal protein S14 type Z</fullName>
    </alternativeName>
</protein>
<evidence type="ECO:0000255" key="1">
    <source>
        <dbReference type="HAMAP-Rule" id="MF_01364"/>
    </source>
</evidence>
<evidence type="ECO:0000305" key="2"/>
<reference key="1">
    <citation type="journal article" date="2005" name="J. Bacteriol.">
        <title>Insights on evolution of virulence and resistance from the complete genome analysis of an early methicillin-resistant Staphylococcus aureus strain and a biofilm-producing methicillin-resistant Staphylococcus epidermidis strain.</title>
        <authorList>
            <person name="Gill S.R."/>
            <person name="Fouts D.E."/>
            <person name="Archer G.L."/>
            <person name="Mongodin E.F."/>
            <person name="DeBoy R.T."/>
            <person name="Ravel J."/>
            <person name="Paulsen I.T."/>
            <person name="Kolonay J.F."/>
            <person name="Brinkac L.M."/>
            <person name="Beanan M.J."/>
            <person name="Dodson R.J."/>
            <person name="Daugherty S.C."/>
            <person name="Madupu R."/>
            <person name="Angiuoli S.V."/>
            <person name="Durkin A.S."/>
            <person name="Haft D.H."/>
            <person name="Vamathevan J.J."/>
            <person name="Khouri H."/>
            <person name="Utterback T.R."/>
            <person name="Lee C."/>
            <person name="Dimitrov G."/>
            <person name="Jiang L."/>
            <person name="Qin H."/>
            <person name="Weidman J."/>
            <person name="Tran K."/>
            <person name="Kang K.H."/>
            <person name="Hance I.R."/>
            <person name="Nelson K.E."/>
            <person name="Fraser C.M."/>
        </authorList>
    </citation>
    <scope>NUCLEOTIDE SEQUENCE [LARGE SCALE GENOMIC DNA]</scope>
    <source>
        <strain>ATCC 35984 / DSM 28319 / BCRC 17069 / CCUG 31568 / BM 3577 / RP62A</strain>
    </source>
</reference>
<keyword id="KW-0479">Metal-binding</keyword>
<keyword id="KW-1185">Reference proteome</keyword>
<keyword id="KW-0687">Ribonucleoprotein</keyword>
<keyword id="KW-0689">Ribosomal protein</keyword>
<keyword id="KW-0694">RNA-binding</keyword>
<keyword id="KW-0699">rRNA-binding</keyword>
<keyword id="KW-0862">Zinc</keyword>
<feature type="chain" id="PRO_0000269138" description="Small ribosomal subunit protein uS14B">
    <location>
        <begin position="1"/>
        <end position="61"/>
    </location>
</feature>
<feature type="binding site" evidence="1">
    <location>
        <position position="24"/>
    </location>
    <ligand>
        <name>Zn(2+)</name>
        <dbReference type="ChEBI" id="CHEBI:29105"/>
    </ligand>
</feature>
<feature type="binding site" evidence="1">
    <location>
        <position position="27"/>
    </location>
    <ligand>
        <name>Zn(2+)</name>
        <dbReference type="ChEBI" id="CHEBI:29105"/>
    </ligand>
</feature>
<feature type="binding site" evidence="1">
    <location>
        <position position="40"/>
    </location>
    <ligand>
        <name>Zn(2+)</name>
        <dbReference type="ChEBI" id="CHEBI:29105"/>
    </ligand>
</feature>
<feature type="binding site" evidence="1">
    <location>
        <position position="43"/>
    </location>
    <ligand>
        <name>Zn(2+)</name>
        <dbReference type="ChEBI" id="CHEBI:29105"/>
    </ligand>
</feature>
<sequence length="61" mass="7284">MAKTSMVAKQQKKQKFAVREYTRCERCGRPHSVYRKFKLCRICFRELAYKGQIPGVRKASW</sequence>
<comment type="function">
    <text evidence="1">Binds 16S rRNA, required for the assembly of 30S particles and may also be responsible for determining the conformation of the 16S rRNA at the A site.</text>
</comment>
<comment type="cofactor">
    <cofactor evidence="1">
        <name>Zn(2+)</name>
        <dbReference type="ChEBI" id="CHEBI:29105"/>
    </cofactor>
    <text evidence="1">Binds 1 zinc ion per subunit.</text>
</comment>
<comment type="subunit">
    <text evidence="1">Part of the 30S ribosomal subunit. Contacts proteins S3 and S10.</text>
</comment>
<comment type="similarity">
    <text evidence="1">Belongs to the universal ribosomal protein uS14 family. Zinc-binding uS14 subfamily.</text>
</comment>
<organism>
    <name type="scientific">Staphylococcus epidermidis (strain ATCC 35984 / DSM 28319 / BCRC 17069 / CCUG 31568 / BM 3577 / RP62A)</name>
    <dbReference type="NCBI Taxonomy" id="176279"/>
    <lineage>
        <taxon>Bacteria</taxon>
        <taxon>Bacillati</taxon>
        <taxon>Bacillota</taxon>
        <taxon>Bacilli</taxon>
        <taxon>Bacillales</taxon>
        <taxon>Staphylococcaceae</taxon>
        <taxon>Staphylococcus</taxon>
    </lineage>
</organism>
<accession>Q5HM12</accession>
<name>RS14Z_STAEQ</name>